<accession>Q64232</accession>
<comment type="function">
    <text evidence="2">Involved in both the production of very long-chain fatty acids for sphingolipid synthesis and the degradation of the sphingosine moiety in sphingolipids through the sphingosine 1-phosphate metabolic pathway (By similarity). Catalyzes the last of the four reactions of the long-chain fatty acids elongation cycle (By similarity). This endoplasmic reticulum-bound enzymatic process, allows the addition of 2 carbons to the chain of long- and very long-chain fatty acids/VLCFAs per cycle (By similarity). This enzyme reduces the trans-2,3-enoyl-CoA fatty acid intermediate to an acyl-CoA that can be further elongated by entering a new cycle of elongation (By similarity). Thereby, it participates in the production of VLCFAs of different chain lengths that are involved in multiple biological processes as precursors of membrane lipids and lipid mediators (By similarity). Catalyzes the saturation step of the sphingosine 1-phosphate metabolic pathway, the conversion of trans-2-hexadecenoyl-CoA to palmitoyl-CoA (By similarity).</text>
</comment>
<comment type="catalytic activity">
    <reaction evidence="2">
        <text>a very-long-chain 2,3-saturated fatty acyl-CoA + NADP(+) = a very-long-chain (2E)-enoyl-CoA + NADPH + H(+)</text>
        <dbReference type="Rhea" id="RHEA:14473"/>
        <dbReference type="ChEBI" id="CHEBI:15378"/>
        <dbReference type="ChEBI" id="CHEBI:57783"/>
        <dbReference type="ChEBI" id="CHEBI:58349"/>
        <dbReference type="ChEBI" id="CHEBI:83724"/>
        <dbReference type="ChEBI" id="CHEBI:83728"/>
        <dbReference type="EC" id="1.3.1.93"/>
    </reaction>
    <physiologicalReaction direction="right-to-left" evidence="2">
        <dbReference type="Rhea" id="RHEA:14475"/>
    </physiologicalReaction>
</comment>
<comment type="catalytic activity">
    <reaction evidence="2">
        <text>octadecanoyl-CoA + NADP(+) = (2E)-octadecenoyl-CoA + NADPH + H(+)</text>
        <dbReference type="Rhea" id="RHEA:35351"/>
        <dbReference type="ChEBI" id="CHEBI:15378"/>
        <dbReference type="ChEBI" id="CHEBI:57394"/>
        <dbReference type="ChEBI" id="CHEBI:57783"/>
        <dbReference type="ChEBI" id="CHEBI:58349"/>
        <dbReference type="ChEBI" id="CHEBI:71412"/>
    </reaction>
    <physiologicalReaction direction="right-to-left" evidence="2">
        <dbReference type="Rhea" id="RHEA:35353"/>
    </physiologicalReaction>
</comment>
<comment type="catalytic activity">
    <reaction evidence="2">
        <text>(2E,7Z,10Z,13Z,16Z)-docosapentaenoyl-CoA + NADPH + H(+) = (7Z,10Z,13Z,16Z)-docosatetraenoyl-CoA + NADP(+)</text>
        <dbReference type="Rhea" id="RHEA:39331"/>
        <dbReference type="ChEBI" id="CHEBI:15378"/>
        <dbReference type="ChEBI" id="CHEBI:57783"/>
        <dbReference type="ChEBI" id="CHEBI:58349"/>
        <dbReference type="ChEBI" id="CHEBI:73856"/>
        <dbReference type="ChEBI" id="CHEBI:76416"/>
    </reaction>
    <physiologicalReaction direction="left-to-right" evidence="2">
        <dbReference type="Rhea" id="RHEA:39332"/>
    </physiologicalReaction>
</comment>
<comment type="catalytic activity">
    <reaction evidence="2">
        <text>(2E,7Z,10Z,13Z,16Z,19Z)-docosahexaenoyl-CoA + NADPH + H(+) = (7Z,10Z,13Z,16Z,19Z)-docosapentaenoyl-CoA + NADP(+)</text>
        <dbReference type="Rhea" id="RHEA:39467"/>
        <dbReference type="ChEBI" id="CHEBI:15378"/>
        <dbReference type="ChEBI" id="CHEBI:57783"/>
        <dbReference type="ChEBI" id="CHEBI:58349"/>
        <dbReference type="ChEBI" id="CHEBI:73870"/>
        <dbReference type="ChEBI" id="CHEBI:76461"/>
    </reaction>
    <physiologicalReaction direction="left-to-right" evidence="2">
        <dbReference type="Rhea" id="RHEA:39468"/>
    </physiologicalReaction>
</comment>
<comment type="catalytic activity">
    <reaction evidence="2">
        <text>(2E,8Z,11Z,14Z)-eicosatetraenoyl-CoA + NADPH + H(+) = (8Z,11Z,14Z)-eicosatrienoyl-CoA + NADP(+)</text>
        <dbReference type="Rhea" id="RHEA:39319"/>
        <dbReference type="ChEBI" id="CHEBI:15378"/>
        <dbReference type="ChEBI" id="CHEBI:57783"/>
        <dbReference type="ChEBI" id="CHEBI:58349"/>
        <dbReference type="ChEBI" id="CHEBI:74264"/>
        <dbReference type="ChEBI" id="CHEBI:76412"/>
    </reaction>
    <physiologicalReaction direction="left-to-right" evidence="2">
        <dbReference type="Rhea" id="RHEA:39320"/>
    </physiologicalReaction>
</comment>
<comment type="catalytic activity">
    <reaction evidence="2">
        <text>(2E)-hexadecenoyl-CoA + NADPH + H(+) = hexadecanoyl-CoA + NADP(+)</text>
        <dbReference type="Rhea" id="RHEA:36143"/>
        <dbReference type="ChEBI" id="CHEBI:15378"/>
        <dbReference type="ChEBI" id="CHEBI:57379"/>
        <dbReference type="ChEBI" id="CHEBI:57783"/>
        <dbReference type="ChEBI" id="CHEBI:58349"/>
        <dbReference type="ChEBI" id="CHEBI:61526"/>
    </reaction>
    <physiologicalReaction direction="left-to-right" evidence="2">
        <dbReference type="Rhea" id="RHEA:36144"/>
    </physiologicalReaction>
</comment>
<comment type="pathway">
    <text evidence="2">Lipid metabolism; fatty acid biosynthesis.</text>
</comment>
<comment type="pathway">
    <text evidence="2">Lipid metabolism; sphingolipid metabolism.</text>
</comment>
<comment type="subunit">
    <text evidence="2">Interacts with ELOVL1 and LASS2.</text>
</comment>
<comment type="subcellular location">
    <subcellularLocation>
        <location evidence="2">Endoplasmic reticulum membrane</location>
        <topology evidence="3">Multi-pass membrane protein</topology>
    </subcellularLocation>
</comment>
<comment type="tissue specificity">
    <text evidence="4">Expressed at high levels in brain and is also found at lower levels in several other tissues.</text>
</comment>
<comment type="PTM">
    <text evidence="4">Glycosylated.</text>
</comment>
<comment type="similarity">
    <text evidence="5">Belongs to the steroid 5-alpha reductase family.</text>
</comment>
<dbReference type="EC" id="1.3.1.93" evidence="2"/>
<dbReference type="EMBL" id="S45663">
    <property type="protein sequence ID" value="AAB23534.1"/>
    <property type="molecule type" value="mRNA"/>
</dbReference>
<dbReference type="EMBL" id="BC059115">
    <property type="protein sequence ID" value="AAH59115.1"/>
    <property type="molecule type" value="mRNA"/>
</dbReference>
<dbReference type="RefSeq" id="NP_612558.1">
    <property type="nucleotide sequence ID" value="NM_138549.2"/>
</dbReference>
<dbReference type="SMR" id="Q64232"/>
<dbReference type="BioGRID" id="251323">
    <property type="interactions" value="2"/>
</dbReference>
<dbReference type="FunCoup" id="Q64232">
    <property type="interactions" value="1915"/>
</dbReference>
<dbReference type="IntAct" id="Q64232">
    <property type="interactions" value="3"/>
</dbReference>
<dbReference type="STRING" id="10116.ENSRNOP00000035416"/>
<dbReference type="GlyCosmos" id="Q64232">
    <property type="glycosylation" value="2 sites, No reported glycans"/>
</dbReference>
<dbReference type="GlyGen" id="Q64232">
    <property type="glycosylation" value="2 sites"/>
</dbReference>
<dbReference type="iPTMnet" id="Q64232"/>
<dbReference type="PhosphoSitePlus" id="Q64232"/>
<dbReference type="jPOST" id="Q64232"/>
<dbReference type="PaxDb" id="10116-ENSRNOP00000035416"/>
<dbReference type="Ensembl" id="ENSRNOT00000037608.5">
    <property type="protein sequence ID" value="ENSRNOP00000035416.4"/>
    <property type="gene ID" value="ENSRNOG00000021808.5"/>
</dbReference>
<dbReference type="GeneID" id="191576"/>
<dbReference type="KEGG" id="rno:191576"/>
<dbReference type="AGR" id="RGD:620376"/>
<dbReference type="CTD" id="9524"/>
<dbReference type="RGD" id="620376">
    <property type="gene designation" value="Tecr"/>
</dbReference>
<dbReference type="eggNOG" id="KOG1639">
    <property type="taxonomic scope" value="Eukaryota"/>
</dbReference>
<dbReference type="GeneTree" id="ENSGT00950000182886"/>
<dbReference type="HOGENOM" id="CLU_059260_1_0_1"/>
<dbReference type="InParanoid" id="Q64232"/>
<dbReference type="PhylomeDB" id="Q64232"/>
<dbReference type="TreeFam" id="TF300908"/>
<dbReference type="BRENDA" id="1.3.1.93">
    <property type="organism ID" value="5301"/>
</dbReference>
<dbReference type="Reactome" id="R-RNO-75876">
    <property type="pathway name" value="Synthesis of very long-chain fatty acyl-CoAs"/>
</dbReference>
<dbReference type="UniPathway" id="UPA00094"/>
<dbReference type="UniPathway" id="UPA00222"/>
<dbReference type="PRO" id="PR:Q64232"/>
<dbReference type="Proteomes" id="UP000002494">
    <property type="component" value="Chromosome 19"/>
</dbReference>
<dbReference type="Bgee" id="ENSRNOG00000021808">
    <property type="expression patterns" value="Expressed in cerebellum and 19 other cell types or tissues"/>
</dbReference>
<dbReference type="ExpressionAtlas" id="Q64232">
    <property type="expression patterns" value="baseline and differential"/>
</dbReference>
<dbReference type="GO" id="GO:0005783">
    <property type="term" value="C:endoplasmic reticulum"/>
    <property type="evidence" value="ECO:0000250"/>
    <property type="project" value="UniProtKB"/>
</dbReference>
<dbReference type="GO" id="GO:0005789">
    <property type="term" value="C:endoplasmic reticulum membrane"/>
    <property type="evidence" value="ECO:0000250"/>
    <property type="project" value="UniProtKB"/>
</dbReference>
<dbReference type="GO" id="GO:0016491">
    <property type="term" value="F:oxidoreductase activity"/>
    <property type="evidence" value="ECO:0000318"/>
    <property type="project" value="GO_Central"/>
</dbReference>
<dbReference type="GO" id="GO:0102758">
    <property type="term" value="F:very-long-chain enoyl-CoA reductase activity"/>
    <property type="evidence" value="ECO:0000250"/>
    <property type="project" value="UniProtKB"/>
</dbReference>
<dbReference type="GO" id="GO:0030497">
    <property type="term" value="P:fatty acid elongation"/>
    <property type="evidence" value="ECO:0000250"/>
    <property type="project" value="UniProtKB"/>
</dbReference>
<dbReference type="GO" id="GO:0006665">
    <property type="term" value="P:sphingolipid metabolic process"/>
    <property type="evidence" value="ECO:0000250"/>
    <property type="project" value="UniProtKB"/>
</dbReference>
<dbReference type="GO" id="GO:0006694">
    <property type="term" value="P:steroid biosynthetic process"/>
    <property type="evidence" value="ECO:0007669"/>
    <property type="project" value="UniProtKB-KW"/>
</dbReference>
<dbReference type="GO" id="GO:0042761">
    <property type="term" value="P:very long-chain fatty acid biosynthetic process"/>
    <property type="evidence" value="ECO:0000250"/>
    <property type="project" value="UniProtKB"/>
</dbReference>
<dbReference type="FunFam" id="3.10.20.90:FF:000083">
    <property type="entry name" value="Trans-2,3-enoyl-CoA reductase b"/>
    <property type="match status" value="1"/>
</dbReference>
<dbReference type="Gene3D" id="1.20.120.1630">
    <property type="match status" value="1"/>
</dbReference>
<dbReference type="Gene3D" id="3.10.20.90">
    <property type="entry name" value="Phosphatidylinositol 3-kinase Catalytic Subunit, Chain A, domain 1"/>
    <property type="match status" value="1"/>
</dbReference>
<dbReference type="InterPro" id="IPR001104">
    <property type="entry name" value="3-oxo-5_a-steroid_4-DH_C"/>
</dbReference>
<dbReference type="InterPro" id="IPR039357">
    <property type="entry name" value="SRD5A/TECR"/>
</dbReference>
<dbReference type="InterPro" id="IPR049127">
    <property type="entry name" value="TECR-like_N"/>
</dbReference>
<dbReference type="InterPro" id="IPR029071">
    <property type="entry name" value="Ubiquitin-like_domsf"/>
</dbReference>
<dbReference type="PANTHER" id="PTHR10556">
    <property type="entry name" value="3-OXO-5-ALPHA-STEROID 4-DEHYDROGENASE"/>
    <property type="match status" value="1"/>
</dbReference>
<dbReference type="PANTHER" id="PTHR10556:SF31">
    <property type="entry name" value="VERY-LONG-CHAIN ENOYL-COA REDUCTASE"/>
    <property type="match status" value="1"/>
</dbReference>
<dbReference type="Pfam" id="PF02544">
    <property type="entry name" value="Steroid_dh"/>
    <property type="match status" value="1"/>
</dbReference>
<dbReference type="Pfam" id="PF21696">
    <property type="entry name" value="TECR_N"/>
    <property type="match status" value="1"/>
</dbReference>
<dbReference type="SUPFAM" id="SSF54236">
    <property type="entry name" value="Ubiquitin-like"/>
    <property type="match status" value="1"/>
</dbReference>
<dbReference type="PROSITE" id="PS50244">
    <property type="entry name" value="S5A_REDUCTASE"/>
    <property type="match status" value="1"/>
</dbReference>
<gene>
    <name type="primary">Tecr</name>
    <name type="synonym">Gpsn2</name>
</gene>
<feature type="chain" id="PRO_0000213685" description="Very-long-chain enoyl-CoA reductase">
    <location>
        <begin position="1"/>
        <end position="308"/>
    </location>
</feature>
<feature type="topological domain" description="Cytoplasmic" evidence="2">
    <location>
        <begin position="1"/>
        <end position="86"/>
    </location>
</feature>
<feature type="transmembrane region" description="Helical" evidence="2">
    <location>
        <begin position="87"/>
        <end position="106"/>
    </location>
</feature>
<feature type="topological domain" description="Lumenal" evidence="2">
    <location>
        <begin position="107"/>
        <end position="124"/>
    </location>
</feature>
<feature type="transmembrane region" description="Helical" evidence="2">
    <location>
        <begin position="125"/>
        <end position="147"/>
    </location>
</feature>
<feature type="topological domain" description="Cytoplasmic" evidence="2">
    <location>
        <begin position="148"/>
        <end position="158"/>
    </location>
</feature>
<feature type="transmembrane region" description="Helical" evidence="2">
    <location>
        <begin position="159"/>
        <end position="180"/>
    </location>
</feature>
<feature type="topological domain" description="Lumenal" evidence="2">
    <location>
        <begin position="181"/>
        <end position="189"/>
    </location>
</feature>
<feature type="transmembrane region" description="Helical" evidence="2">
    <location>
        <begin position="190"/>
        <end position="216"/>
    </location>
</feature>
<feature type="topological domain" description="Cytoplasmic" evidence="2">
    <location>
        <begin position="217"/>
        <end position="245"/>
    </location>
</feature>
<feature type="transmembrane region" description="Helical" evidence="2">
    <location>
        <begin position="246"/>
        <end position="262"/>
    </location>
</feature>
<feature type="topological domain" description="Lumenal" evidence="2">
    <location>
        <begin position="263"/>
        <end position="264"/>
    </location>
</feature>
<feature type="transmembrane region" description="Helical" evidence="2">
    <location>
        <begin position="265"/>
        <end position="292"/>
    </location>
</feature>
<feature type="topological domain" description="Cytoplasmic" evidence="2">
    <location>
        <begin position="293"/>
        <end position="308"/>
    </location>
</feature>
<feature type="modified residue" description="N6-acetyllysine" evidence="2">
    <location>
        <position position="22"/>
    </location>
</feature>
<feature type="modified residue" description="Phosphoserine" evidence="6">
    <location>
        <position position="58"/>
    </location>
</feature>
<feature type="modified residue" description="N6-acetyllysine" evidence="1">
    <location>
        <position position="60"/>
    </location>
</feature>
<sequence length="308" mass="36123">MKHYEVEIRDAKTREKLCFLDKVEPQATISEIKTLFTKTHPQWYPARQSLRLDPKGKSLKDEDVLQKLPVGTTATLYFRDLGAQISWVTVFLTEYAGPLFIYLLFYFRVPFIYGRKYDFTSSRHTVVHLACMCHSFHYIKRLLETLFVHRFSHGTMPLRNIFKNCTYYWGFAAWMAYYINHPLYTPPTYGVQQVKLALAIFVICQLGNFSIHMALRDLRPAGSKTRKIPYPTKNPFTWLFLLVSCPNYTYEVGSWIGFAIMTQCVPVALFSLVGFTQMTIWAKGKHRSYLKEFRDYPPLRMPIIPFLL</sequence>
<proteinExistence type="evidence at protein level"/>
<evidence type="ECO:0000250" key="1">
    <source>
        <dbReference type="UniProtKB" id="Q9CY27"/>
    </source>
</evidence>
<evidence type="ECO:0000250" key="2">
    <source>
        <dbReference type="UniProtKB" id="Q9NZ01"/>
    </source>
</evidence>
<evidence type="ECO:0000255" key="3"/>
<evidence type="ECO:0000269" key="4">
    <source>
    </source>
</evidence>
<evidence type="ECO:0000305" key="5"/>
<evidence type="ECO:0007744" key="6">
    <source>
    </source>
</evidence>
<protein>
    <recommendedName>
        <fullName evidence="5">Very-long-chain enoyl-CoA reductase</fullName>
        <ecNumber evidence="2">1.3.1.93</ecNumber>
    </recommendedName>
    <alternativeName>
        <fullName>Synaptic glycoprotein SC2</fullName>
    </alternativeName>
    <alternativeName>
        <fullName>Trans-2,3-enoyl-CoA reductase</fullName>
        <shortName>TER</shortName>
    </alternativeName>
</protein>
<reference key="1">
    <citation type="journal article" date="1992" name="J. Neurosci. Res.">
        <title>Molecular cloning of a novel mRNA using an antibody directed against synaptic glycoproteins.</title>
        <authorList>
            <person name="Johnston I.G."/>
            <person name="Rush S.J."/>
            <person name="Gurd J.W."/>
            <person name="Brown I.R."/>
        </authorList>
    </citation>
    <scope>NUCLEOTIDE SEQUENCE [MRNA]</scope>
    <scope>TISSUE SPECIFICITY</scope>
    <source>
        <tissue>Brain</tissue>
    </source>
</reference>
<reference key="2">
    <citation type="journal article" date="2004" name="Genome Res.">
        <title>The status, quality, and expansion of the NIH full-length cDNA project: the Mammalian Gene Collection (MGC).</title>
        <authorList>
            <consortium name="The MGC Project Team"/>
        </authorList>
    </citation>
    <scope>NUCLEOTIDE SEQUENCE [LARGE SCALE MRNA]</scope>
    <source>
        <tissue>Pituitary</tissue>
    </source>
</reference>
<reference key="3">
    <citation type="journal article" date="2012" name="Nat. Commun.">
        <title>Quantitative maps of protein phosphorylation sites across 14 different rat organs and tissues.</title>
        <authorList>
            <person name="Lundby A."/>
            <person name="Secher A."/>
            <person name="Lage K."/>
            <person name="Nordsborg N.B."/>
            <person name="Dmytriyev A."/>
            <person name="Lundby C."/>
            <person name="Olsen J.V."/>
        </authorList>
    </citation>
    <scope>PHOSPHORYLATION [LARGE SCALE ANALYSIS] AT SER-58</scope>
    <scope>IDENTIFICATION BY MASS SPECTROMETRY [LARGE SCALE ANALYSIS]</scope>
</reference>
<keyword id="KW-0007">Acetylation</keyword>
<keyword id="KW-0256">Endoplasmic reticulum</keyword>
<keyword id="KW-0275">Fatty acid biosynthesis</keyword>
<keyword id="KW-0276">Fatty acid metabolism</keyword>
<keyword id="KW-0444">Lipid biosynthesis</keyword>
<keyword id="KW-0443">Lipid metabolism</keyword>
<keyword id="KW-0472">Membrane</keyword>
<keyword id="KW-0521">NADP</keyword>
<keyword id="KW-0560">Oxidoreductase</keyword>
<keyword id="KW-0597">Phosphoprotein</keyword>
<keyword id="KW-1185">Reference proteome</keyword>
<keyword id="KW-0746">Sphingolipid metabolism</keyword>
<keyword id="KW-0752">Steroid biosynthesis</keyword>
<keyword id="KW-0812">Transmembrane</keyword>
<keyword id="KW-1133">Transmembrane helix</keyword>
<name>TECR_RAT</name>
<organism>
    <name type="scientific">Rattus norvegicus</name>
    <name type="common">Rat</name>
    <dbReference type="NCBI Taxonomy" id="10116"/>
    <lineage>
        <taxon>Eukaryota</taxon>
        <taxon>Metazoa</taxon>
        <taxon>Chordata</taxon>
        <taxon>Craniata</taxon>
        <taxon>Vertebrata</taxon>
        <taxon>Euteleostomi</taxon>
        <taxon>Mammalia</taxon>
        <taxon>Eutheria</taxon>
        <taxon>Euarchontoglires</taxon>
        <taxon>Glires</taxon>
        <taxon>Rodentia</taxon>
        <taxon>Myomorpha</taxon>
        <taxon>Muroidea</taxon>
        <taxon>Muridae</taxon>
        <taxon>Murinae</taxon>
        <taxon>Rattus</taxon>
    </lineage>
</organism>